<keyword id="KW-0963">Cytoplasm</keyword>
<keyword id="KW-0344">Guanine-nucleotide releasing factor</keyword>
<keyword id="KW-0378">Hydrolase</keyword>
<keyword id="KW-0547">Nucleotide-binding</keyword>
<keyword id="KW-0548">Nucleotidyltransferase</keyword>
<keyword id="KW-1267">Proteomics identification</keyword>
<keyword id="KW-1185">Reference proteome</keyword>
<keyword id="KW-0808">Transferase</keyword>
<sequence length="385" mass="42362">MALPHDSNETSYLLPPNNEDWGRQTIPDFVYGQKDLMAEGIQWPRNAPGIPDALPQSPFDAALCSAWKQRVELGLFRYRLRELQTQILPGAVGFVAQLNVERGVQRRPPQTIKSVRQAFDPVQFNFNKIRPGEVLFRLHREPDLPGTLLQEDILVVINVSPLEWGHVLLVPEPARQLPQRLLPGALRAGIEAVLLSLHPGFRVGFNSLGGLASVNHLHLHGYYLAHRLPVEQAPSEPLDPGGHLHLLQDLPAPGFLFYTRGPGPDLESLISRVCRATDYLTDHEIAHNLFVTRGAPPGKTSPSSALTGVRVILWARKSSFGIKDGEAFNVALCELAGHLPVKTSQDFSSLTEAAAVALIQDCRLPPSQAEDVQAALVALMSQEEQ</sequence>
<dbReference type="EC" id="2.7.7.78"/>
<dbReference type="EMBL" id="AK130527">
    <property type="protein sequence ID" value="BAC85370.1"/>
    <property type="molecule type" value="mRNA"/>
</dbReference>
<dbReference type="EMBL" id="AC091167">
    <property type="status" value="NOT_ANNOTATED_CDS"/>
    <property type="molecule type" value="Genomic_DNA"/>
</dbReference>
<dbReference type="CCDS" id="CCDS32327.1"/>
<dbReference type="RefSeq" id="NP_001013679.2">
    <property type="nucleotide sequence ID" value="NM_001013657.3"/>
</dbReference>
<dbReference type="RefSeq" id="NP_001309740.1">
    <property type="nucleotide sequence ID" value="NM_001322811.2"/>
</dbReference>
<dbReference type="BioGRID" id="133642">
    <property type="interactions" value="16"/>
</dbReference>
<dbReference type="FunCoup" id="Q6ZNW5">
    <property type="interactions" value="827"/>
</dbReference>
<dbReference type="IntAct" id="Q6ZNW5">
    <property type="interactions" value="2"/>
</dbReference>
<dbReference type="STRING" id="9606.ENSP00000452793"/>
<dbReference type="iPTMnet" id="Q6ZNW5"/>
<dbReference type="PhosphoSitePlus" id="Q6ZNW5"/>
<dbReference type="BioMuta" id="GDPGP1"/>
<dbReference type="DMDM" id="296434456"/>
<dbReference type="jPOST" id="Q6ZNW5"/>
<dbReference type="MassIVE" id="Q6ZNW5"/>
<dbReference type="PaxDb" id="9606-ENSP00000452793"/>
<dbReference type="PeptideAtlas" id="Q6ZNW5"/>
<dbReference type="ProteomicsDB" id="68049"/>
<dbReference type="Pumba" id="Q6ZNW5"/>
<dbReference type="Antibodypedia" id="28769">
    <property type="antibodies" value="51 antibodies from 12 providers"/>
</dbReference>
<dbReference type="DNASU" id="390637"/>
<dbReference type="Ensembl" id="ENST00000329600.8">
    <property type="protein sequence ID" value="ENSP00000368405.3"/>
    <property type="gene ID" value="ENSG00000183208.13"/>
</dbReference>
<dbReference type="Ensembl" id="ENST00000558017.5">
    <property type="protein sequence ID" value="ENSP00000452793.1"/>
    <property type="gene ID" value="ENSG00000183208.13"/>
</dbReference>
<dbReference type="Ensembl" id="ENST00000558291.2">
    <property type="protein sequence ID" value="ENSP00000454128.2"/>
    <property type="gene ID" value="ENSG00000183208.13"/>
</dbReference>
<dbReference type="Ensembl" id="ENST00000559204.6">
    <property type="protein sequence ID" value="ENSP00000453822.2"/>
    <property type="gene ID" value="ENSG00000183208.13"/>
</dbReference>
<dbReference type="GeneID" id="390637"/>
<dbReference type="KEGG" id="hsa:390637"/>
<dbReference type="MANE-Select" id="ENST00000329600.8">
    <property type="protein sequence ID" value="ENSP00000368405.3"/>
    <property type="RefSeq nucleotide sequence ID" value="NM_001013657.3"/>
    <property type="RefSeq protein sequence ID" value="NP_001013679.2"/>
</dbReference>
<dbReference type="UCSC" id="uc059ned.1">
    <property type="organism name" value="human"/>
</dbReference>
<dbReference type="AGR" id="HGNC:34360"/>
<dbReference type="CTD" id="390637"/>
<dbReference type="GeneCards" id="GDPGP1"/>
<dbReference type="HGNC" id="HGNC:34360">
    <property type="gene designation" value="GDPGP1"/>
</dbReference>
<dbReference type="HPA" id="ENSG00000183208">
    <property type="expression patterns" value="Low tissue specificity"/>
</dbReference>
<dbReference type="MIM" id="619240">
    <property type="type" value="gene"/>
</dbReference>
<dbReference type="neXtProt" id="NX_Q6ZNW5"/>
<dbReference type="OpenTargets" id="ENSG00000183208"/>
<dbReference type="PharmGKB" id="PA162378247"/>
<dbReference type="VEuPathDB" id="HostDB:ENSG00000183208"/>
<dbReference type="eggNOG" id="KOG2720">
    <property type="taxonomic scope" value="Eukaryota"/>
</dbReference>
<dbReference type="GeneTree" id="ENSGT00390000016718"/>
<dbReference type="HOGENOM" id="CLU_041964_2_1_1"/>
<dbReference type="InParanoid" id="Q6ZNW5"/>
<dbReference type="OMA" id="NNEDWDG"/>
<dbReference type="OrthoDB" id="417175at2759"/>
<dbReference type="PAN-GO" id="Q6ZNW5">
    <property type="GO annotations" value="3 GO annotations based on evolutionary models"/>
</dbReference>
<dbReference type="PhylomeDB" id="Q6ZNW5"/>
<dbReference type="TreeFam" id="TF313615"/>
<dbReference type="BioCyc" id="MetaCyc:G66-31756-MONOMER"/>
<dbReference type="BRENDA" id="2.7.7.78">
    <property type="organism ID" value="2681"/>
</dbReference>
<dbReference type="PathwayCommons" id="Q6ZNW5"/>
<dbReference type="SignaLink" id="Q6ZNW5"/>
<dbReference type="BioGRID-ORCS" id="390637">
    <property type="hits" value="14 hits in 1154 CRISPR screens"/>
</dbReference>
<dbReference type="ChiTaRS" id="GDPGP1">
    <property type="organism name" value="human"/>
</dbReference>
<dbReference type="GenomeRNAi" id="390637"/>
<dbReference type="Pharos" id="Q6ZNW5">
    <property type="development level" value="Tbio"/>
</dbReference>
<dbReference type="PRO" id="PR:Q6ZNW5"/>
<dbReference type="Proteomes" id="UP000005640">
    <property type="component" value="Chromosome 15"/>
</dbReference>
<dbReference type="RNAct" id="Q6ZNW5">
    <property type="molecule type" value="protein"/>
</dbReference>
<dbReference type="Bgee" id="ENSG00000183208">
    <property type="expression patterns" value="Expressed in male germ line stem cell (sensu Vertebrata) in testis and 104 other cell types or tissues"/>
</dbReference>
<dbReference type="ExpressionAtlas" id="Q6ZNW5">
    <property type="expression patterns" value="baseline and differential"/>
</dbReference>
<dbReference type="GO" id="GO:0005737">
    <property type="term" value="C:cytoplasm"/>
    <property type="evidence" value="ECO:0000250"/>
    <property type="project" value="UniProtKB"/>
</dbReference>
<dbReference type="GO" id="GO:0080048">
    <property type="term" value="F:GDP-D-glucose phosphorylase activity"/>
    <property type="evidence" value="ECO:0000314"/>
    <property type="project" value="UniProtKB"/>
</dbReference>
<dbReference type="GO" id="GO:0005085">
    <property type="term" value="F:guanyl-nucleotide exchange factor activity"/>
    <property type="evidence" value="ECO:0007669"/>
    <property type="project" value="UniProtKB-KW"/>
</dbReference>
<dbReference type="GO" id="GO:0016787">
    <property type="term" value="F:hydrolase activity"/>
    <property type="evidence" value="ECO:0007669"/>
    <property type="project" value="UniProtKB-KW"/>
</dbReference>
<dbReference type="GO" id="GO:0000166">
    <property type="term" value="F:nucleotide binding"/>
    <property type="evidence" value="ECO:0007669"/>
    <property type="project" value="UniProtKB-KW"/>
</dbReference>
<dbReference type="GO" id="GO:0006006">
    <property type="term" value="P:glucose metabolic process"/>
    <property type="evidence" value="ECO:0000315"/>
    <property type="project" value="UniProtKB"/>
</dbReference>
<dbReference type="InterPro" id="IPR026506">
    <property type="entry name" value="GDPGP"/>
</dbReference>
<dbReference type="PANTHER" id="PTHR20884">
    <property type="entry name" value="GDP-D-GLUCOSE PHOSPHORYLASE 1"/>
    <property type="match status" value="1"/>
</dbReference>
<dbReference type="PANTHER" id="PTHR20884:SF8">
    <property type="entry name" value="GDP-D-GLUCOSE PHOSPHORYLASE 1"/>
    <property type="match status" value="1"/>
</dbReference>
<name>GDPP1_HUMAN</name>
<feature type="chain" id="PRO_0000336750" description="GDP-D-glucose phosphorylase 1">
    <location>
        <begin position="1"/>
        <end position="385"/>
    </location>
</feature>
<feature type="active site" description="Tele-GMP-histidine intermediate" evidence="1">
    <location>
        <position position="218"/>
    </location>
</feature>
<feature type="sequence variant" id="VAR_043555" description="In dbSNP:rs7171194." evidence="2">
    <original>M</original>
    <variation>T</variation>
    <location>
        <position position="37"/>
    </location>
</feature>
<feature type="sequence variant" id="VAR_043556" description="In dbSNP:rs10152994." evidence="2">
    <original>P</original>
    <variation>T</variation>
    <location>
        <position position="264"/>
    </location>
</feature>
<feature type="sequence variant" id="VAR_043557" description="In dbSNP:rs10153004." evidence="2">
    <original>T</original>
    <variation>I</variation>
    <location>
        <position position="307"/>
    </location>
</feature>
<feature type="sequence conflict" description="In Ref. 1; BAC85370." evidence="4" ref="1">
    <original>R</original>
    <variation>G</variation>
    <location>
        <position position="23"/>
    </location>
</feature>
<gene>
    <name type="primary">GDPGP1</name>
    <name type="synonym">C15orf58</name>
</gene>
<reference key="1">
    <citation type="journal article" date="2004" name="Nat. Genet.">
        <title>Complete sequencing and characterization of 21,243 full-length human cDNAs.</title>
        <authorList>
            <person name="Ota T."/>
            <person name="Suzuki Y."/>
            <person name="Nishikawa T."/>
            <person name="Otsuki T."/>
            <person name="Sugiyama T."/>
            <person name="Irie R."/>
            <person name="Wakamatsu A."/>
            <person name="Hayashi K."/>
            <person name="Sato H."/>
            <person name="Nagai K."/>
            <person name="Kimura K."/>
            <person name="Makita H."/>
            <person name="Sekine M."/>
            <person name="Obayashi M."/>
            <person name="Nishi T."/>
            <person name="Shibahara T."/>
            <person name="Tanaka T."/>
            <person name="Ishii S."/>
            <person name="Yamamoto J."/>
            <person name="Saito K."/>
            <person name="Kawai Y."/>
            <person name="Isono Y."/>
            <person name="Nakamura Y."/>
            <person name="Nagahari K."/>
            <person name="Murakami K."/>
            <person name="Yasuda T."/>
            <person name="Iwayanagi T."/>
            <person name="Wagatsuma M."/>
            <person name="Shiratori A."/>
            <person name="Sudo H."/>
            <person name="Hosoiri T."/>
            <person name="Kaku Y."/>
            <person name="Kodaira H."/>
            <person name="Kondo H."/>
            <person name="Sugawara M."/>
            <person name="Takahashi M."/>
            <person name="Kanda K."/>
            <person name="Yokoi T."/>
            <person name="Furuya T."/>
            <person name="Kikkawa E."/>
            <person name="Omura Y."/>
            <person name="Abe K."/>
            <person name="Kamihara K."/>
            <person name="Katsuta N."/>
            <person name="Sato K."/>
            <person name="Tanikawa M."/>
            <person name="Yamazaki M."/>
            <person name="Ninomiya K."/>
            <person name="Ishibashi T."/>
            <person name="Yamashita H."/>
            <person name="Murakawa K."/>
            <person name="Fujimori K."/>
            <person name="Tanai H."/>
            <person name="Kimata M."/>
            <person name="Watanabe M."/>
            <person name="Hiraoka S."/>
            <person name="Chiba Y."/>
            <person name="Ishida S."/>
            <person name="Ono Y."/>
            <person name="Takiguchi S."/>
            <person name="Watanabe S."/>
            <person name="Yosida M."/>
            <person name="Hotuta T."/>
            <person name="Kusano J."/>
            <person name="Kanehori K."/>
            <person name="Takahashi-Fujii A."/>
            <person name="Hara H."/>
            <person name="Tanase T.-O."/>
            <person name="Nomura Y."/>
            <person name="Togiya S."/>
            <person name="Komai F."/>
            <person name="Hara R."/>
            <person name="Takeuchi K."/>
            <person name="Arita M."/>
            <person name="Imose N."/>
            <person name="Musashino K."/>
            <person name="Yuuki H."/>
            <person name="Oshima A."/>
            <person name="Sasaki N."/>
            <person name="Aotsuka S."/>
            <person name="Yoshikawa Y."/>
            <person name="Matsunawa H."/>
            <person name="Ichihara T."/>
            <person name="Shiohata N."/>
            <person name="Sano S."/>
            <person name="Moriya S."/>
            <person name="Momiyama H."/>
            <person name="Satoh N."/>
            <person name="Takami S."/>
            <person name="Terashima Y."/>
            <person name="Suzuki O."/>
            <person name="Nakagawa S."/>
            <person name="Senoh A."/>
            <person name="Mizoguchi H."/>
            <person name="Goto Y."/>
            <person name="Shimizu F."/>
            <person name="Wakebe H."/>
            <person name="Hishigaki H."/>
            <person name="Watanabe T."/>
            <person name="Sugiyama A."/>
            <person name="Takemoto M."/>
            <person name="Kawakami B."/>
            <person name="Yamazaki M."/>
            <person name="Watanabe K."/>
            <person name="Kumagai A."/>
            <person name="Itakura S."/>
            <person name="Fukuzumi Y."/>
            <person name="Fujimori Y."/>
            <person name="Komiyama M."/>
            <person name="Tashiro H."/>
            <person name="Tanigami A."/>
            <person name="Fujiwara T."/>
            <person name="Ono T."/>
            <person name="Yamada K."/>
            <person name="Fujii Y."/>
            <person name="Ozaki K."/>
            <person name="Hirao M."/>
            <person name="Ohmori Y."/>
            <person name="Kawabata A."/>
            <person name="Hikiji T."/>
            <person name="Kobatake N."/>
            <person name="Inagaki H."/>
            <person name="Ikema Y."/>
            <person name="Okamoto S."/>
            <person name="Okitani R."/>
            <person name="Kawakami T."/>
            <person name="Noguchi S."/>
            <person name="Itoh T."/>
            <person name="Shigeta K."/>
            <person name="Senba T."/>
            <person name="Matsumura K."/>
            <person name="Nakajima Y."/>
            <person name="Mizuno T."/>
            <person name="Morinaga M."/>
            <person name="Sasaki M."/>
            <person name="Togashi T."/>
            <person name="Oyama M."/>
            <person name="Hata H."/>
            <person name="Watanabe M."/>
            <person name="Komatsu T."/>
            <person name="Mizushima-Sugano J."/>
            <person name="Satoh T."/>
            <person name="Shirai Y."/>
            <person name="Takahashi Y."/>
            <person name="Nakagawa K."/>
            <person name="Okumura K."/>
            <person name="Nagase T."/>
            <person name="Nomura N."/>
            <person name="Kikuchi H."/>
            <person name="Masuho Y."/>
            <person name="Yamashita R."/>
            <person name="Nakai K."/>
            <person name="Yada T."/>
            <person name="Nakamura Y."/>
            <person name="Ohara O."/>
            <person name="Isogai T."/>
            <person name="Sugano S."/>
        </authorList>
    </citation>
    <scope>NUCLEOTIDE SEQUENCE [LARGE SCALE MRNA]</scope>
    <scope>VARIANTS THR-37; THR-264 AND ILE-307</scope>
    <source>
        <tissue>Salivary gland</tissue>
    </source>
</reference>
<reference key="2">
    <citation type="journal article" date="2006" name="Nature">
        <title>Analysis of the DNA sequence and duplication history of human chromosome 15.</title>
        <authorList>
            <person name="Zody M.C."/>
            <person name="Garber M."/>
            <person name="Sharpe T."/>
            <person name="Young S.K."/>
            <person name="Rowen L."/>
            <person name="O'Neill K."/>
            <person name="Whittaker C.A."/>
            <person name="Kamal M."/>
            <person name="Chang J.L."/>
            <person name="Cuomo C.A."/>
            <person name="Dewar K."/>
            <person name="FitzGerald M.G."/>
            <person name="Kodira C.D."/>
            <person name="Madan A."/>
            <person name="Qin S."/>
            <person name="Yang X."/>
            <person name="Abbasi N."/>
            <person name="Abouelleil A."/>
            <person name="Arachchi H.M."/>
            <person name="Baradarani L."/>
            <person name="Birditt B."/>
            <person name="Bloom S."/>
            <person name="Bloom T."/>
            <person name="Borowsky M.L."/>
            <person name="Burke J."/>
            <person name="Butler J."/>
            <person name="Cook A."/>
            <person name="DeArellano K."/>
            <person name="DeCaprio D."/>
            <person name="Dorris L. III"/>
            <person name="Dors M."/>
            <person name="Eichler E.E."/>
            <person name="Engels R."/>
            <person name="Fahey J."/>
            <person name="Fleetwood P."/>
            <person name="Friedman C."/>
            <person name="Gearin G."/>
            <person name="Hall J.L."/>
            <person name="Hensley G."/>
            <person name="Johnson E."/>
            <person name="Jones C."/>
            <person name="Kamat A."/>
            <person name="Kaur A."/>
            <person name="Locke D.P."/>
            <person name="Madan A."/>
            <person name="Munson G."/>
            <person name="Jaffe D.B."/>
            <person name="Lui A."/>
            <person name="Macdonald P."/>
            <person name="Mauceli E."/>
            <person name="Naylor J.W."/>
            <person name="Nesbitt R."/>
            <person name="Nicol R."/>
            <person name="O'Leary S.B."/>
            <person name="Ratcliffe A."/>
            <person name="Rounsley S."/>
            <person name="She X."/>
            <person name="Sneddon K.M.B."/>
            <person name="Stewart S."/>
            <person name="Sougnez C."/>
            <person name="Stone S.M."/>
            <person name="Topham K."/>
            <person name="Vincent D."/>
            <person name="Wang S."/>
            <person name="Zimmer A.R."/>
            <person name="Birren B.W."/>
            <person name="Hood L."/>
            <person name="Lander E.S."/>
            <person name="Nusbaum C."/>
        </authorList>
    </citation>
    <scope>NUCLEOTIDE SEQUENCE [LARGE SCALE GENOMIC DNA]</scope>
</reference>
<reference key="3">
    <citation type="journal article" date="2011" name="J. Biol. Chem.">
        <title>A novel GDP-D-glucose phosphorylase involved in quality control of the nucleoside diphosphate sugar pool in Caenorhabditis elegans and mammals.</title>
        <authorList>
            <person name="Adler L.N."/>
            <person name="Gomez T.A."/>
            <person name="Clarke S.G."/>
            <person name="Linster C.L."/>
        </authorList>
    </citation>
    <scope>FUNCTION</scope>
    <scope>CATALYTIC ACTIVITY</scope>
    <scope>SUBSTRATE SPECIFICITY</scope>
    <scope>KINETIC PARAMETERS</scope>
</reference>
<protein>
    <recommendedName>
        <fullName>GDP-D-glucose phosphorylase 1</fullName>
        <ecNumber>2.7.7.78</ecNumber>
    </recommendedName>
</protein>
<proteinExistence type="evidence at protein level"/>
<evidence type="ECO:0000250" key="1"/>
<evidence type="ECO:0000269" key="2">
    <source>
    </source>
</evidence>
<evidence type="ECO:0000269" key="3">
    <source>
    </source>
</evidence>
<evidence type="ECO:0000305" key="4"/>
<accession>Q6ZNW5</accession>
<organism>
    <name type="scientific">Homo sapiens</name>
    <name type="common">Human</name>
    <dbReference type="NCBI Taxonomy" id="9606"/>
    <lineage>
        <taxon>Eukaryota</taxon>
        <taxon>Metazoa</taxon>
        <taxon>Chordata</taxon>
        <taxon>Craniata</taxon>
        <taxon>Vertebrata</taxon>
        <taxon>Euteleostomi</taxon>
        <taxon>Mammalia</taxon>
        <taxon>Eutheria</taxon>
        <taxon>Euarchontoglires</taxon>
        <taxon>Primates</taxon>
        <taxon>Haplorrhini</taxon>
        <taxon>Catarrhini</taxon>
        <taxon>Hominidae</taxon>
        <taxon>Homo</taxon>
    </lineage>
</organism>
<comment type="function">
    <text evidence="3">Specific and highly efficient GDP-D-glucose phosphorylase regulating the levels of GDP-D-glucose in cells.</text>
</comment>
<comment type="catalytic activity">
    <reaction evidence="3">
        <text>GDP-alpha-D-glucose + phosphate = alpha-D-glucose 1-phosphate + GDP + H(+)</text>
        <dbReference type="Rhea" id="RHEA:30387"/>
        <dbReference type="ChEBI" id="CHEBI:15378"/>
        <dbReference type="ChEBI" id="CHEBI:43474"/>
        <dbReference type="ChEBI" id="CHEBI:58189"/>
        <dbReference type="ChEBI" id="CHEBI:58601"/>
        <dbReference type="ChEBI" id="CHEBI:62230"/>
        <dbReference type="EC" id="2.7.7.78"/>
    </reaction>
</comment>
<comment type="biophysicochemical properties">
    <kinetics>
        <KM evidence="3">2 uM for GDP-D-glucose (at 31 degrees Celsius)</KM>
        <KM evidence="3">12 uM for GDP-L-galactose (at 31 degrees Celsius)</KM>
        <KM evidence="3">42 uM for GDP-D-mannose (at 31 degrees Celsius)</KM>
        <KM evidence="3">2.9 mM for inorganic phosphate (at 31 degrees Celsius)</KM>
        <text>kcat is 26 sec(-1) at 31 degrees Celsius. The catalytic efficiency for GDP-D-glucose is 35-fold higher than for GDP-L-galactose.</text>
    </kinetics>
</comment>
<comment type="subcellular location">
    <subcellularLocation>
        <location evidence="1">Cytoplasm</location>
    </subcellularLocation>
</comment>
<comment type="miscellaneous">
    <text>The orthologs in A.thaliana are GDP-L-galactose phosphorylases catalyzing the first reaction of the Smirnoff-Wheeler pathway, the major route to ascorbate biosynthesis in plants.</text>
</comment>
<comment type="similarity">
    <text evidence="4">Belongs to the GDPGP1 family.</text>
</comment>